<organism>
    <name type="scientific">Chromohalobacter salexigens (strain ATCC BAA-138 / DSM 3043 / CIP 106854 / NCIMB 13768 / 1H11)</name>
    <dbReference type="NCBI Taxonomy" id="290398"/>
    <lineage>
        <taxon>Bacteria</taxon>
        <taxon>Pseudomonadati</taxon>
        <taxon>Pseudomonadota</taxon>
        <taxon>Gammaproteobacteria</taxon>
        <taxon>Oceanospirillales</taxon>
        <taxon>Halomonadaceae</taxon>
        <taxon>Chromohalobacter</taxon>
    </lineage>
</organism>
<proteinExistence type="inferred from homology"/>
<feature type="chain" id="PRO_0000313908" description="tRNA U34 carboxymethyltransferase">
    <location>
        <begin position="1"/>
        <end position="333"/>
    </location>
</feature>
<feature type="binding site" evidence="1">
    <location>
        <position position="97"/>
    </location>
    <ligand>
        <name>carboxy-S-adenosyl-L-methionine</name>
        <dbReference type="ChEBI" id="CHEBI:134278"/>
    </ligand>
</feature>
<feature type="binding site" evidence="1">
    <location>
        <position position="111"/>
    </location>
    <ligand>
        <name>carboxy-S-adenosyl-L-methionine</name>
        <dbReference type="ChEBI" id="CHEBI:134278"/>
    </ligand>
</feature>
<feature type="binding site" evidence="1">
    <location>
        <position position="116"/>
    </location>
    <ligand>
        <name>carboxy-S-adenosyl-L-methionine</name>
        <dbReference type="ChEBI" id="CHEBI:134278"/>
    </ligand>
</feature>
<feature type="binding site" evidence="1">
    <location>
        <position position="136"/>
    </location>
    <ligand>
        <name>carboxy-S-adenosyl-L-methionine</name>
        <dbReference type="ChEBI" id="CHEBI:134278"/>
    </ligand>
</feature>
<feature type="binding site" evidence="1">
    <location>
        <begin position="158"/>
        <end position="160"/>
    </location>
    <ligand>
        <name>carboxy-S-adenosyl-L-methionine</name>
        <dbReference type="ChEBI" id="CHEBI:134278"/>
    </ligand>
</feature>
<feature type="binding site" evidence="1">
    <location>
        <begin position="189"/>
        <end position="190"/>
    </location>
    <ligand>
        <name>carboxy-S-adenosyl-L-methionine</name>
        <dbReference type="ChEBI" id="CHEBI:134278"/>
    </ligand>
</feature>
<feature type="binding site" evidence="1">
    <location>
        <position position="205"/>
    </location>
    <ligand>
        <name>carboxy-S-adenosyl-L-methionine</name>
        <dbReference type="ChEBI" id="CHEBI:134278"/>
    </ligand>
</feature>
<feature type="binding site" evidence="1">
    <location>
        <position position="209"/>
    </location>
    <ligand>
        <name>carboxy-S-adenosyl-L-methionine</name>
        <dbReference type="ChEBI" id="CHEBI:134278"/>
    </ligand>
</feature>
<feature type="binding site" evidence="1">
    <location>
        <position position="324"/>
    </location>
    <ligand>
        <name>carboxy-S-adenosyl-L-methionine</name>
        <dbReference type="ChEBI" id="CHEBI:134278"/>
    </ligand>
</feature>
<name>CMOB_CHRSD</name>
<sequence length="333" mass="37499">MPDRSLPPAQRALFDALLDHGLSEWVARLPAQLADGLDRKRFGDLPAWEKAVAKLPTLPEARDVALDSDSVRVDLALTESQQRQCENLLRKLMPWRKGPYTLGGIHIDTEWRSDWKWQRVAPHLSPLEGRRVLDVGGGNGYHGWRMVGAGAAFVLIVDPSPRFYYQFQAVRHFVGDADGWRTHFLPVGIEAVPPKLEAFDTTFSMGVLYHRPSPLEHLMQLRDTLRPGGELVLETLVVEGDANTVFMPGERYAAMPNVYFLPSSKALAHWLERCGFEDVRVVDEAPTSLAEQRSTEWMTFHSLADFLDPEDATLTLEGYPAPRRAVLVARKPE</sequence>
<evidence type="ECO:0000255" key="1">
    <source>
        <dbReference type="HAMAP-Rule" id="MF_01590"/>
    </source>
</evidence>
<gene>
    <name evidence="1" type="primary">cmoB</name>
    <name type="ordered locus">Csal_2548</name>
</gene>
<accession>Q1QUG3</accession>
<keyword id="KW-1185">Reference proteome</keyword>
<keyword id="KW-0808">Transferase</keyword>
<keyword id="KW-0819">tRNA processing</keyword>
<protein>
    <recommendedName>
        <fullName evidence="1">tRNA U34 carboxymethyltransferase</fullName>
        <ecNumber evidence="1">2.5.1.-</ecNumber>
    </recommendedName>
</protein>
<reference key="1">
    <citation type="journal article" date="2011" name="Stand. Genomic Sci.">
        <title>Complete genome sequence of the halophilic and highly halotolerant Chromohalobacter salexigens type strain (1H11(T)).</title>
        <authorList>
            <person name="Copeland A."/>
            <person name="O'Connor K."/>
            <person name="Lucas S."/>
            <person name="Lapidus A."/>
            <person name="Berry K.W."/>
            <person name="Detter J.C."/>
            <person name="Del Rio T.G."/>
            <person name="Hammon N."/>
            <person name="Dalin E."/>
            <person name="Tice H."/>
            <person name="Pitluck S."/>
            <person name="Bruce D."/>
            <person name="Goodwin L."/>
            <person name="Han C."/>
            <person name="Tapia R."/>
            <person name="Saunders E."/>
            <person name="Schmutz J."/>
            <person name="Brettin T."/>
            <person name="Larimer F."/>
            <person name="Land M."/>
            <person name="Hauser L."/>
            <person name="Vargas C."/>
            <person name="Nieto J.J."/>
            <person name="Kyrpides N.C."/>
            <person name="Ivanova N."/>
            <person name="Goker M."/>
            <person name="Klenk H.P."/>
            <person name="Csonka L.N."/>
            <person name="Woyke T."/>
        </authorList>
    </citation>
    <scope>NUCLEOTIDE SEQUENCE [LARGE SCALE GENOMIC DNA]</scope>
    <source>
        <strain>ATCC BAA-138 / DSM 3043 / CIP 106854 / NCIMB 13768 / 1H11</strain>
    </source>
</reference>
<comment type="function">
    <text evidence="1">Catalyzes carboxymethyl transfer from carboxy-S-adenosyl-L-methionine (Cx-SAM) to 5-hydroxyuridine (ho5U) to form 5-carboxymethoxyuridine (cmo5U) at position 34 in tRNAs.</text>
</comment>
<comment type="catalytic activity">
    <reaction evidence="1">
        <text>carboxy-S-adenosyl-L-methionine + 5-hydroxyuridine(34) in tRNA = 5-carboxymethoxyuridine(34) in tRNA + S-adenosyl-L-homocysteine + H(+)</text>
        <dbReference type="Rhea" id="RHEA:52848"/>
        <dbReference type="Rhea" id="RHEA-COMP:13381"/>
        <dbReference type="Rhea" id="RHEA-COMP:13383"/>
        <dbReference type="ChEBI" id="CHEBI:15378"/>
        <dbReference type="ChEBI" id="CHEBI:57856"/>
        <dbReference type="ChEBI" id="CHEBI:134278"/>
        <dbReference type="ChEBI" id="CHEBI:136877"/>
        <dbReference type="ChEBI" id="CHEBI:136879"/>
    </reaction>
</comment>
<comment type="subunit">
    <text evidence="1">Homotetramer.</text>
</comment>
<comment type="similarity">
    <text evidence="1">Belongs to the class I-like SAM-binding methyltransferase superfamily. CmoB family.</text>
</comment>
<dbReference type="EC" id="2.5.1.-" evidence="1"/>
<dbReference type="EMBL" id="CP000285">
    <property type="protein sequence ID" value="ABE59895.1"/>
    <property type="molecule type" value="Genomic_DNA"/>
</dbReference>
<dbReference type="RefSeq" id="WP_011507841.1">
    <property type="nucleotide sequence ID" value="NC_007963.1"/>
</dbReference>
<dbReference type="SMR" id="Q1QUG3"/>
<dbReference type="STRING" id="290398.Csal_2548"/>
<dbReference type="GeneID" id="95335252"/>
<dbReference type="KEGG" id="csa:Csal_2548"/>
<dbReference type="eggNOG" id="COG0500">
    <property type="taxonomic scope" value="Bacteria"/>
</dbReference>
<dbReference type="HOGENOM" id="CLU_052665_0_0_6"/>
<dbReference type="OrthoDB" id="9773188at2"/>
<dbReference type="Proteomes" id="UP000000239">
    <property type="component" value="Chromosome"/>
</dbReference>
<dbReference type="GO" id="GO:0008168">
    <property type="term" value="F:methyltransferase activity"/>
    <property type="evidence" value="ECO:0007669"/>
    <property type="project" value="TreeGrafter"/>
</dbReference>
<dbReference type="GO" id="GO:0016765">
    <property type="term" value="F:transferase activity, transferring alkyl or aryl (other than methyl) groups"/>
    <property type="evidence" value="ECO:0007669"/>
    <property type="project" value="UniProtKB-UniRule"/>
</dbReference>
<dbReference type="GO" id="GO:0002098">
    <property type="term" value="P:tRNA wobble uridine modification"/>
    <property type="evidence" value="ECO:0007669"/>
    <property type="project" value="InterPro"/>
</dbReference>
<dbReference type="CDD" id="cd02440">
    <property type="entry name" value="AdoMet_MTases"/>
    <property type="match status" value="1"/>
</dbReference>
<dbReference type="Gene3D" id="3.40.50.150">
    <property type="entry name" value="Vaccinia Virus protein VP39"/>
    <property type="match status" value="1"/>
</dbReference>
<dbReference type="HAMAP" id="MF_01590">
    <property type="entry name" value="tRNA_carboxymethyltr_CmoB"/>
    <property type="match status" value="1"/>
</dbReference>
<dbReference type="InterPro" id="IPR010017">
    <property type="entry name" value="CmoB"/>
</dbReference>
<dbReference type="InterPro" id="IPR027555">
    <property type="entry name" value="Mo5U34_MeTrfas-like"/>
</dbReference>
<dbReference type="InterPro" id="IPR029063">
    <property type="entry name" value="SAM-dependent_MTases_sf"/>
</dbReference>
<dbReference type="NCBIfam" id="NF011650">
    <property type="entry name" value="PRK15068.1"/>
    <property type="match status" value="1"/>
</dbReference>
<dbReference type="NCBIfam" id="TIGR00452">
    <property type="entry name" value="tRNA 5-methoxyuridine(34)/uridine 5-oxyacetic acid(34) synthase CmoB"/>
    <property type="match status" value="1"/>
</dbReference>
<dbReference type="PANTHER" id="PTHR43464">
    <property type="entry name" value="METHYLTRANSFERASE"/>
    <property type="match status" value="1"/>
</dbReference>
<dbReference type="PANTHER" id="PTHR43464:SF95">
    <property type="entry name" value="TRNA U34 CARBOXYMETHYLTRANSFERASE"/>
    <property type="match status" value="1"/>
</dbReference>
<dbReference type="Pfam" id="PF08003">
    <property type="entry name" value="Methyltransf_9"/>
    <property type="match status" value="1"/>
</dbReference>
<dbReference type="SUPFAM" id="SSF53335">
    <property type="entry name" value="S-adenosyl-L-methionine-dependent methyltransferases"/>
    <property type="match status" value="1"/>
</dbReference>